<comment type="function">
    <text evidence="1 2">Regulates actin polymerization by stimulating the actin-nucleating activity of the Arp2/3 complex. Involved in various processes, such as mitosis and cytokinesis, via its role in the regulation of actin polymerization. Together with CDC42, involved in the extension and maintenance of the formation of thin, actin-rich surface projections called filopodia. In addition to its role in the cytoplasm, also plays a role in the nucleus by regulating gene transcription, probably by promoting nuclear actin polymerization (By similarity). Binds to HSF1/HSTF1 and forms a complex on heat shock promoter elements (HSE) that negatively regulates HSP90 expression. Plays a role in dendrite spine morphogenesis (By similarity).</text>
</comment>
<comment type="subunit">
    <text evidence="1 2 3 8">Binds actin and the Arp2/3 complex. Interacts with CDC42 (By similarity). Interacts with FCHSD1. Interacts with FCHSD2 (By similarity). Binds to SH3 domains of GRB2. Interacts with the C-terminal SH3 domain of DNMBP (By similarity). Interacts with SNX9 (By similarity). Interacts with the WW domains of PRPF40A/FBP11 (By similarity). Interacts with PTK2/FAK1 (PubMed:14676198). Interacts with PACSIN1, PACSIN2 and PACSIN3 (By similarity). Interacts with NOSTRIN. Binds to TNK2. Interacts with SNX33. Interacts with NONO (via second RRM domain); the interaction is direct. Component of a multiprotein complex with NONO and SFPQ; associates with the complex via direct interaction with NONO (By similarity).</text>
</comment>
<comment type="interaction">
    <interactant intactId="EBI-6142604">
        <id>O08816</id>
    </interactant>
    <interactant intactId="EBI-6142604">
        <id>O08816</id>
        <label>Wasl</label>
    </interactant>
    <organismsDiffer>false</organismsDiffer>
    <experiments>3</experiments>
</comment>
<comment type="interaction">
    <interactant intactId="EBI-6142604">
        <id>O08816</id>
    </interactant>
    <interactant intactId="EBI-6986245">
        <id>Q6IN36</id>
        <label>Wipf1</label>
    </interactant>
    <organismsDiffer>false</organismsDiffer>
    <experiments>2</experiments>
</comment>
<comment type="interaction">
    <interactant intactId="EBI-6142604">
        <id>O08816</id>
    </interactant>
    <interactant intactId="EBI-81752">
        <id>P60953</id>
        <label>CDC42</label>
    </interactant>
    <organismsDiffer>true</organismsDiffer>
    <experiments>2</experiments>
</comment>
<comment type="interaction">
    <interactant intactId="EBI-6142604">
        <id>O08816</id>
    </interactant>
    <interactant intactId="EBI-397955">
        <id>Q60598</id>
        <label>Cttn</label>
    </interactant>
    <organismsDiffer>true</organismsDiffer>
    <experiments>2</experiments>
</comment>
<comment type="interaction">
    <interactant intactId="EBI-6142604">
        <id>O08816</id>
    </interactant>
    <interactant intactId="EBI-10039462">
        <id>P0DJ88</id>
        <label>espF(U)</label>
    </interactant>
    <organismsDiffer>true</organismsDiffer>
    <experiments>4</experiments>
</comment>
<comment type="interaction">
    <interactant intactId="EBI-6142604">
        <id>O08816</id>
    </interactant>
    <interactant intactId="EBI-22229752">
        <id>Q8X482</id>
        <label>espF(U)</label>
    </interactant>
    <organismsDiffer>true</organismsDiffer>
    <experiments>5</experiments>
</comment>
<comment type="interaction">
    <interactant intactId="EBI-6142604">
        <id>O08816</id>
    </interactant>
    <interactant intactId="EBI-1391643">
        <id>Q8IVI9</id>
        <label>NOSTRIN</label>
    </interactant>
    <organismsDiffer>true</organismsDiffer>
    <experiments>3</experiments>
</comment>
<comment type="interaction">
    <interactant intactId="EBI-6142604">
        <id>O08816</id>
    </interactant>
    <interactant intactId="EBI-713780">
        <id>P07737</id>
        <label>PFN1</label>
    </interactant>
    <organismsDiffer>true</organismsDiffer>
    <experiments>4</experiments>
</comment>
<comment type="interaction">
    <interactant intactId="EBI-6142604">
        <id>O08816</id>
    </interactant>
    <interactant intactId="EBI-473138">
        <id>P35080</id>
        <label>PFN2</label>
    </interactant>
    <organismsDiffer>true</organismsDiffer>
    <experiments>3</experiments>
</comment>
<comment type="subcellular location">
    <subcellularLocation>
        <location evidence="8">Cytoplasm</location>
        <location evidence="8">Cytoskeleton</location>
    </subcellularLocation>
    <subcellularLocation>
        <location evidence="8">Nucleus</location>
    </subcellularLocation>
    <subcellularLocation>
        <location evidence="2">Cytoplasm</location>
    </subcellularLocation>
    <text evidence="2">Preferentially localized in the cytoplasm when phosphorylated and in the nucleus when unphosphorylated (By similarity). Exported from the nucleus by an nuclear export signal (NES)-dependent mechanism to the cytoplasm (By similarity).</text>
</comment>
<comment type="PTM">
    <text evidence="1">Phosphorylation at Ser-239, Tyr-253, Ser-480 and Ser-481 enhances actin polymerization activity.</text>
</comment>
<name>WASL_RAT</name>
<protein>
    <recommendedName>
        <fullName evidence="9">Actin nucleation-promoting factor WASL</fullName>
    </recommendedName>
    <alternativeName>
        <fullName>Neural Wiskott-Aldrich syndrome protein</fullName>
        <shortName>N-WASP</shortName>
    </alternativeName>
</protein>
<organism>
    <name type="scientific">Rattus norvegicus</name>
    <name type="common">Rat</name>
    <dbReference type="NCBI Taxonomy" id="10116"/>
    <lineage>
        <taxon>Eukaryota</taxon>
        <taxon>Metazoa</taxon>
        <taxon>Chordata</taxon>
        <taxon>Craniata</taxon>
        <taxon>Vertebrata</taxon>
        <taxon>Euteleostomi</taxon>
        <taxon>Mammalia</taxon>
        <taxon>Eutheria</taxon>
        <taxon>Euarchontoglires</taxon>
        <taxon>Glires</taxon>
        <taxon>Rodentia</taxon>
        <taxon>Myomorpha</taxon>
        <taxon>Muroidea</taxon>
        <taxon>Muridae</taxon>
        <taxon>Murinae</taxon>
        <taxon>Rattus</taxon>
    </lineage>
</organism>
<accession>O08816</accession>
<sequence length="501" mass="54325">MSSGQQPPRRVTNVGSLLLTPQENESLFSFLGKKCVTMSSAVVQLYAADRNCMWSKKCSGVACLVKDNPQRSYFLRIFDIKDGKLLWEQELYNNFVYNSPRGYFHTFAGDTCQVALNFANEEEAKKFRKAVTDLLGRRQRKSEKRRDAPNGPNLPMATVDIKNPEITTNRFYSSQVNNISHTKEKKKGKAKKKRLTKADIGTPSNFQHIGHVGWDPNTGFDLNNLDPELKNLFDMCGISEAQLKDRETSKVIYDFIEKTGGVEAVKNELRRQAPPPPPPSRGGPPPPPPPPHSSGPPPPPARGRGAPPPPPSRAPTAAPPPPPPSRPGVVVPPPPPNRMYPPPPPALPSSAPSGPPPPPPLSMAGSTAPPPPPPPPPPPGPPPPPGLPSDGDHQVPASSGNKAALLDQIREGAQLKKVEQNSRPVSCSGRDALLDQIRQGIQLKSVSDGQESTPPTPAPTSGIVGALMEVMQKRSKAIHSSDEDEDDDDEEDFQDDDEWED</sequence>
<gene>
    <name type="primary">Wasl</name>
</gene>
<evidence type="ECO:0000250" key="1">
    <source>
        <dbReference type="UniProtKB" id="O00401"/>
    </source>
</evidence>
<evidence type="ECO:0000250" key="2">
    <source>
        <dbReference type="UniProtKB" id="Q91YD9"/>
    </source>
</evidence>
<evidence type="ECO:0000250" key="3">
    <source>
        <dbReference type="UniProtKB" id="Q95107"/>
    </source>
</evidence>
<evidence type="ECO:0000255" key="4">
    <source>
        <dbReference type="PROSITE-ProRule" id="PRU00057"/>
    </source>
</evidence>
<evidence type="ECO:0000255" key="5">
    <source>
        <dbReference type="PROSITE-ProRule" id="PRU00406"/>
    </source>
</evidence>
<evidence type="ECO:0000255" key="6">
    <source>
        <dbReference type="PROSITE-ProRule" id="PRU00410"/>
    </source>
</evidence>
<evidence type="ECO:0000256" key="7">
    <source>
        <dbReference type="SAM" id="MobiDB-lite"/>
    </source>
</evidence>
<evidence type="ECO:0000269" key="8">
    <source>
    </source>
</evidence>
<evidence type="ECO:0000305" key="9"/>
<evidence type="ECO:0007744" key="10">
    <source>
    </source>
</evidence>
<evidence type="ECO:0007829" key="11">
    <source>
        <dbReference type="PDB" id="1MKE"/>
    </source>
</evidence>
<evidence type="ECO:0007829" key="12">
    <source>
        <dbReference type="PDB" id="2IFS"/>
    </source>
</evidence>
<evidence type="ECO:0007829" key="13">
    <source>
        <dbReference type="PDB" id="8S5T"/>
    </source>
</evidence>
<feature type="initiator methionine" description="Removed" evidence="1">
    <location>
        <position position="1"/>
    </location>
</feature>
<feature type="chain" id="PRO_0000189002" description="Actin nucleation-promoting factor WASL">
    <location>
        <begin position="2"/>
        <end position="501"/>
    </location>
</feature>
<feature type="domain" description="WH1" evidence="6">
    <location>
        <begin position="31"/>
        <end position="138"/>
    </location>
</feature>
<feature type="domain" description="CRIB" evidence="4">
    <location>
        <begin position="200"/>
        <end position="213"/>
    </location>
</feature>
<feature type="domain" description="WH2 1" evidence="5">
    <location>
        <begin position="401"/>
        <end position="418"/>
    </location>
</feature>
<feature type="domain" description="WH2 2" evidence="5">
    <location>
        <begin position="429"/>
        <end position="446"/>
    </location>
</feature>
<feature type="region of interest" description="Disordered" evidence="7">
    <location>
        <begin position="135"/>
        <end position="158"/>
    </location>
</feature>
<feature type="region of interest" description="Disordered" evidence="7">
    <location>
        <begin position="180"/>
        <end position="202"/>
    </location>
</feature>
<feature type="region of interest" description="Disordered" evidence="7">
    <location>
        <begin position="263"/>
        <end position="405"/>
    </location>
</feature>
<feature type="region of interest" description="Disordered" evidence="7">
    <location>
        <begin position="442"/>
        <end position="501"/>
    </location>
</feature>
<feature type="compositionally biased region" description="Basic residues" evidence="7">
    <location>
        <begin position="183"/>
        <end position="195"/>
    </location>
</feature>
<feature type="compositionally biased region" description="Pro residues" evidence="7">
    <location>
        <begin position="273"/>
        <end position="361"/>
    </location>
</feature>
<feature type="compositionally biased region" description="Pro residues" evidence="7">
    <location>
        <begin position="368"/>
        <end position="387"/>
    </location>
</feature>
<feature type="compositionally biased region" description="Polar residues" evidence="7">
    <location>
        <begin position="442"/>
        <end position="453"/>
    </location>
</feature>
<feature type="compositionally biased region" description="Acidic residues" evidence="7">
    <location>
        <begin position="482"/>
        <end position="501"/>
    </location>
</feature>
<feature type="modified residue" description="N-acetylserine" evidence="1">
    <location>
        <position position="2"/>
    </location>
</feature>
<feature type="modified residue" description="Phosphoserine; by TNK2" evidence="1">
    <location>
        <position position="239"/>
    </location>
</feature>
<feature type="modified residue" description="Phosphotyrosine; by FAK1 and TNK2" evidence="8 10">
    <location>
        <position position="253"/>
    </location>
</feature>
<feature type="modified residue" description="Omega-N-methylarginine" evidence="1">
    <location>
        <position position="304"/>
    </location>
</feature>
<feature type="modified residue" description="Phosphoserine" evidence="1">
    <location>
        <position position="480"/>
    </location>
</feature>
<feature type="modified residue" description="Phosphoserine" evidence="1">
    <location>
        <position position="481"/>
    </location>
</feature>
<feature type="turn" evidence="11">
    <location>
        <begin position="8"/>
        <end position="11"/>
    </location>
</feature>
<feature type="strand" evidence="11">
    <location>
        <begin position="13"/>
        <end position="16"/>
    </location>
</feature>
<feature type="strand" evidence="12">
    <location>
        <begin position="19"/>
        <end position="21"/>
    </location>
</feature>
<feature type="strand" evidence="11">
    <location>
        <begin position="36"/>
        <end position="49"/>
    </location>
</feature>
<feature type="turn" evidence="11">
    <location>
        <begin position="50"/>
        <end position="52"/>
    </location>
</feature>
<feature type="strand" evidence="11">
    <location>
        <begin position="53"/>
        <end position="67"/>
    </location>
</feature>
<feature type="turn" evidence="11">
    <location>
        <begin position="68"/>
        <end position="71"/>
    </location>
</feature>
<feature type="strand" evidence="11">
    <location>
        <begin position="72"/>
        <end position="78"/>
    </location>
</feature>
<feature type="strand" evidence="11">
    <location>
        <begin position="80"/>
        <end position="82"/>
    </location>
</feature>
<feature type="strand" evidence="11">
    <location>
        <begin position="84"/>
        <end position="90"/>
    </location>
</feature>
<feature type="strand" evidence="11">
    <location>
        <begin position="100"/>
        <end position="108"/>
    </location>
</feature>
<feature type="strand" evidence="11">
    <location>
        <begin position="110"/>
        <end position="120"/>
    </location>
</feature>
<feature type="helix" evidence="11">
    <location>
        <begin position="121"/>
        <end position="137"/>
    </location>
</feature>
<feature type="helix" evidence="13">
    <location>
        <begin position="197"/>
        <end position="199"/>
    </location>
</feature>
<feature type="helix" evidence="13">
    <location>
        <begin position="211"/>
        <end position="213"/>
    </location>
</feature>
<feature type="turn" evidence="13">
    <location>
        <begin position="216"/>
        <end position="218"/>
    </location>
</feature>
<feature type="strand" evidence="13">
    <location>
        <begin position="222"/>
        <end position="225"/>
    </location>
</feature>
<feature type="helix" evidence="13">
    <location>
        <begin position="227"/>
        <end position="235"/>
    </location>
</feature>
<feature type="helix" evidence="13">
    <location>
        <begin position="240"/>
        <end position="243"/>
    </location>
</feature>
<feature type="helix" evidence="13">
    <location>
        <begin position="246"/>
        <end position="258"/>
    </location>
</feature>
<feature type="helix" evidence="13">
    <location>
        <begin position="261"/>
        <end position="273"/>
    </location>
</feature>
<keyword id="KW-0002">3D-structure</keyword>
<keyword id="KW-0007">Acetylation</keyword>
<keyword id="KW-0009">Actin-binding</keyword>
<keyword id="KW-0131">Cell cycle</keyword>
<keyword id="KW-0132">Cell division</keyword>
<keyword id="KW-0963">Cytoplasm</keyword>
<keyword id="KW-0206">Cytoskeleton</keyword>
<keyword id="KW-0488">Methylation</keyword>
<keyword id="KW-0498">Mitosis</keyword>
<keyword id="KW-0539">Nucleus</keyword>
<keyword id="KW-0597">Phosphoprotein</keyword>
<keyword id="KW-1185">Reference proteome</keyword>
<keyword id="KW-0677">Repeat</keyword>
<keyword id="KW-0804">Transcription</keyword>
<keyword id="KW-0805">Transcription regulation</keyword>
<reference key="1">
    <citation type="journal article" date="1997" name="Gene">
        <title>Identification of N-WASP homologs in human and rat brain.</title>
        <authorList>
            <person name="Fukuoka M."/>
            <person name="Miki H."/>
            <person name="Takenawa T."/>
        </authorList>
    </citation>
    <scope>NUCLEOTIDE SEQUENCE [MRNA]</scope>
</reference>
<reference key="2">
    <citation type="journal article" date="2004" name="J. Biol. Chem.">
        <title>Focal adhesion kinase regulation of N-WASP subcellular localization and function.</title>
        <authorList>
            <person name="Wu X."/>
            <person name="Suetsugu S."/>
            <person name="Cooper L.A."/>
            <person name="Takenawa T."/>
            <person name="Guan J.L."/>
        </authorList>
    </citation>
    <scope>INTERACTION WITH PTK2/FAK1</scope>
    <scope>SUBCELLULAR LOCATION</scope>
    <scope>PHOSPHORYLATION AT TYR-253</scope>
</reference>
<reference key="3">
    <citation type="journal article" date="2012" name="Nat. Commun.">
        <title>Quantitative maps of protein phosphorylation sites across 14 different rat organs and tissues.</title>
        <authorList>
            <person name="Lundby A."/>
            <person name="Secher A."/>
            <person name="Lage K."/>
            <person name="Nordsborg N.B."/>
            <person name="Dmytriyev A."/>
            <person name="Lundby C."/>
            <person name="Olsen J.V."/>
        </authorList>
    </citation>
    <scope>PHOSPHORYLATION [LARGE SCALE ANALYSIS] AT TYR-253</scope>
    <scope>IDENTIFICATION BY MASS SPECTROMETRY [LARGE SCALE ANALYSIS]</scope>
</reference>
<reference key="4">
    <citation type="journal article" date="2002" name="Cell">
        <title>Structure of the N-WASP EVH1 domain-WIP complex: insight into the molecular basis of Wiskott-Aldrich Syndrome.</title>
        <authorList>
            <person name="Volkman B.F."/>
            <person name="Prehoda K.E."/>
            <person name="Scott J.A."/>
            <person name="Peterson F.C."/>
            <person name="Lim W.A."/>
        </authorList>
    </citation>
    <scope>STRUCTURE BY NMR OF 37-485</scope>
</reference>
<proteinExistence type="evidence at protein level"/>
<dbReference type="EMBL" id="D88461">
    <property type="protein sequence ID" value="BAA21534.1"/>
    <property type="molecule type" value="mRNA"/>
</dbReference>
<dbReference type="PDB" id="1MKE">
    <property type="method" value="NMR"/>
    <property type="chains" value="A=26-147"/>
</dbReference>
<dbReference type="PDB" id="2IFS">
    <property type="method" value="NMR"/>
    <property type="chains" value="A=26-147"/>
</dbReference>
<dbReference type="PDB" id="8S5T">
    <property type="method" value="X-ray"/>
    <property type="resolution" value="3.30 A"/>
    <property type="chains" value="A=191-273"/>
</dbReference>
<dbReference type="PDBsum" id="1MKE"/>
<dbReference type="PDBsum" id="2IFS"/>
<dbReference type="PDBsum" id="8S5T"/>
<dbReference type="BMRB" id="O08816"/>
<dbReference type="SASBDB" id="O08816"/>
<dbReference type="SMR" id="O08816"/>
<dbReference type="CORUM" id="O08816"/>
<dbReference type="DIP" id="DIP-17016N"/>
<dbReference type="ELM" id="O08816"/>
<dbReference type="FunCoup" id="O08816">
    <property type="interactions" value="3069"/>
</dbReference>
<dbReference type="IntAct" id="O08816">
    <property type="interactions" value="19"/>
</dbReference>
<dbReference type="MINT" id="O08816"/>
<dbReference type="STRING" id="10116.ENSRNOP00000009261"/>
<dbReference type="BindingDB" id="O08816"/>
<dbReference type="ChEMBL" id="CHEMBL3774296"/>
<dbReference type="GlyGen" id="O08816">
    <property type="glycosylation" value="2 sites"/>
</dbReference>
<dbReference type="iPTMnet" id="O08816"/>
<dbReference type="PhosphoSitePlus" id="O08816"/>
<dbReference type="jPOST" id="O08816"/>
<dbReference type="PaxDb" id="10116-ENSRNOP00000009261"/>
<dbReference type="UCSC" id="RGD:735144">
    <property type="organism name" value="rat"/>
</dbReference>
<dbReference type="AGR" id="RGD:735144"/>
<dbReference type="RGD" id="735144">
    <property type="gene designation" value="Wasl"/>
</dbReference>
<dbReference type="eggNOG" id="KOG3671">
    <property type="taxonomic scope" value="Eukaryota"/>
</dbReference>
<dbReference type="InParanoid" id="O08816"/>
<dbReference type="PhylomeDB" id="O08816"/>
<dbReference type="CD-CODE" id="170524B4">
    <property type="entry name" value="Synthetic Condensate 000168"/>
</dbReference>
<dbReference type="CD-CODE" id="28618213">
    <property type="entry name" value="Synthetic Condensate 000040"/>
</dbReference>
<dbReference type="CD-CODE" id="56808221">
    <property type="entry name" value="Signaling cluster"/>
</dbReference>
<dbReference type="CD-CODE" id="589474B0">
    <property type="entry name" value="Synthetic Condensate 000287"/>
</dbReference>
<dbReference type="CD-CODE" id="84374B0C">
    <property type="entry name" value="Synthetic Condensate 000158"/>
</dbReference>
<dbReference type="CD-CODE" id="A7E9CBB4">
    <property type="entry name" value="Postsynaptic density"/>
</dbReference>
<dbReference type="CD-CODE" id="B6F3E647">
    <property type="entry name" value="Synthetic Condensate 000176"/>
</dbReference>
<dbReference type="EvolutionaryTrace" id="O08816"/>
<dbReference type="PRO" id="PR:O08816"/>
<dbReference type="Proteomes" id="UP000002494">
    <property type="component" value="Unplaced"/>
</dbReference>
<dbReference type="GO" id="GO:0030478">
    <property type="term" value="C:actin cap"/>
    <property type="evidence" value="ECO:0000266"/>
    <property type="project" value="RGD"/>
</dbReference>
<dbReference type="GO" id="GO:0031252">
    <property type="term" value="C:cell leading edge"/>
    <property type="evidence" value="ECO:0000314"/>
    <property type="project" value="RGD"/>
</dbReference>
<dbReference type="GO" id="GO:0031410">
    <property type="term" value="C:cytoplasmic vesicle"/>
    <property type="evidence" value="ECO:0000314"/>
    <property type="project" value="BHF-UCL"/>
</dbReference>
<dbReference type="GO" id="GO:0005829">
    <property type="term" value="C:cytosol"/>
    <property type="evidence" value="ECO:0000266"/>
    <property type="project" value="RGD"/>
</dbReference>
<dbReference type="GO" id="GO:0098978">
    <property type="term" value="C:glutamatergic synapse"/>
    <property type="evidence" value="ECO:0000314"/>
    <property type="project" value="SynGO"/>
</dbReference>
<dbReference type="GO" id="GO:0000139">
    <property type="term" value="C:Golgi membrane"/>
    <property type="evidence" value="ECO:0000314"/>
    <property type="project" value="RGD"/>
</dbReference>
<dbReference type="GO" id="GO:0030027">
    <property type="term" value="C:lamellipodium"/>
    <property type="evidence" value="ECO:0000266"/>
    <property type="project" value="RGD"/>
</dbReference>
<dbReference type="GO" id="GO:0005634">
    <property type="term" value="C:nucleus"/>
    <property type="evidence" value="ECO:0000250"/>
    <property type="project" value="UniProtKB"/>
</dbReference>
<dbReference type="GO" id="GO:0005886">
    <property type="term" value="C:plasma membrane"/>
    <property type="evidence" value="ECO:0000318"/>
    <property type="project" value="GO_Central"/>
</dbReference>
<dbReference type="GO" id="GO:0098794">
    <property type="term" value="C:postsynapse"/>
    <property type="evidence" value="ECO:0000314"/>
    <property type="project" value="SynGO"/>
</dbReference>
<dbReference type="GO" id="GO:0003779">
    <property type="term" value="F:actin binding"/>
    <property type="evidence" value="ECO:0007669"/>
    <property type="project" value="UniProtKB-KW"/>
</dbReference>
<dbReference type="GO" id="GO:0008092">
    <property type="term" value="F:cytoskeletal protein binding"/>
    <property type="evidence" value="ECO:0000353"/>
    <property type="project" value="RGD"/>
</dbReference>
<dbReference type="GO" id="GO:0042802">
    <property type="term" value="F:identical protein binding"/>
    <property type="evidence" value="ECO:0000353"/>
    <property type="project" value="IntAct"/>
</dbReference>
<dbReference type="GO" id="GO:0030036">
    <property type="term" value="P:actin cytoskeleton organization"/>
    <property type="evidence" value="ECO:0000266"/>
    <property type="project" value="RGD"/>
</dbReference>
<dbReference type="GO" id="GO:0030041">
    <property type="term" value="P:actin filament polymerization"/>
    <property type="evidence" value="ECO:0000250"/>
    <property type="project" value="UniProtKB"/>
</dbReference>
<dbReference type="GO" id="GO:0051301">
    <property type="term" value="P:cell division"/>
    <property type="evidence" value="ECO:0007669"/>
    <property type="project" value="UniProtKB-KW"/>
</dbReference>
<dbReference type="GO" id="GO:0060997">
    <property type="term" value="P:dendritic spine morphogenesis"/>
    <property type="evidence" value="ECO:0000250"/>
    <property type="project" value="UniProtKB"/>
</dbReference>
<dbReference type="GO" id="GO:0010324">
    <property type="term" value="P:membrane invagination"/>
    <property type="evidence" value="ECO:0000314"/>
    <property type="project" value="BHF-UCL"/>
</dbReference>
<dbReference type="GO" id="GO:2000402">
    <property type="term" value="P:negative regulation of lymphocyte migration"/>
    <property type="evidence" value="ECO:0000266"/>
    <property type="project" value="RGD"/>
</dbReference>
<dbReference type="GO" id="GO:1903526">
    <property type="term" value="P:negative regulation of membrane tubulation"/>
    <property type="evidence" value="ECO:0000266"/>
    <property type="project" value="RGD"/>
</dbReference>
<dbReference type="GO" id="GO:0097320">
    <property type="term" value="P:plasma membrane tubulation"/>
    <property type="evidence" value="ECO:0000314"/>
    <property type="project" value="BHF-UCL"/>
</dbReference>
<dbReference type="GO" id="GO:0050921">
    <property type="term" value="P:positive regulation of chemotaxis"/>
    <property type="evidence" value="ECO:0000315"/>
    <property type="project" value="RGD"/>
</dbReference>
<dbReference type="GO" id="GO:2000370">
    <property type="term" value="P:positive regulation of clathrin-dependent endocytosis"/>
    <property type="evidence" value="ECO:0000314"/>
    <property type="project" value="BHF-UCL"/>
</dbReference>
<dbReference type="GO" id="GO:0051491">
    <property type="term" value="P:positive regulation of filopodium assembly"/>
    <property type="evidence" value="ECO:0000314"/>
    <property type="project" value="BHF-UCL"/>
</dbReference>
<dbReference type="GO" id="GO:0045944">
    <property type="term" value="P:positive regulation of transcription by RNA polymerase II"/>
    <property type="evidence" value="ECO:0000250"/>
    <property type="project" value="UniProtKB"/>
</dbReference>
<dbReference type="GO" id="GO:0099173">
    <property type="term" value="P:postsynapse organization"/>
    <property type="evidence" value="ECO:0000314"/>
    <property type="project" value="SynGO"/>
</dbReference>
<dbReference type="GO" id="GO:0098974">
    <property type="term" value="P:postsynaptic actin cytoskeleton organization"/>
    <property type="evidence" value="ECO:0000314"/>
    <property type="project" value="SynGO"/>
</dbReference>
<dbReference type="GO" id="GO:0031503">
    <property type="term" value="P:protein-containing complex localization"/>
    <property type="evidence" value="ECO:0000266"/>
    <property type="project" value="RGD"/>
</dbReference>
<dbReference type="GO" id="GO:0060491">
    <property type="term" value="P:regulation of cell projection assembly"/>
    <property type="evidence" value="ECO:0000315"/>
    <property type="project" value="RGD"/>
</dbReference>
<dbReference type="GO" id="GO:0099175">
    <property type="term" value="P:regulation of postsynapse organization"/>
    <property type="evidence" value="ECO:0000266"/>
    <property type="project" value="RGD"/>
</dbReference>
<dbReference type="GO" id="GO:0032880">
    <property type="term" value="P:regulation of protein localization"/>
    <property type="evidence" value="ECO:0000266"/>
    <property type="project" value="RGD"/>
</dbReference>
<dbReference type="GO" id="GO:0009617">
    <property type="term" value="P:response to bacterium"/>
    <property type="evidence" value="ECO:0000266"/>
    <property type="project" value="RGD"/>
</dbReference>
<dbReference type="GO" id="GO:0051653">
    <property type="term" value="P:spindle localization"/>
    <property type="evidence" value="ECO:0000266"/>
    <property type="project" value="RGD"/>
</dbReference>
<dbReference type="GO" id="GO:0006900">
    <property type="term" value="P:vesicle budding from membrane"/>
    <property type="evidence" value="ECO:0000314"/>
    <property type="project" value="BHF-UCL"/>
</dbReference>
<dbReference type="GO" id="GO:0016050">
    <property type="term" value="P:vesicle organization"/>
    <property type="evidence" value="ECO:0000314"/>
    <property type="project" value="BHF-UCL"/>
</dbReference>
<dbReference type="GO" id="GO:0030050">
    <property type="term" value="P:vesicle transport along actin filament"/>
    <property type="evidence" value="ECO:0000314"/>
    <property type="project" value="BHF-UCL"/>
</dbReference>
<dbReference type="CDD" id="cd00132">
    <property type="entry name" value="CRIB"/>
    <property type="match status" value="1"/>
</dbReference>
<dbReference type="CDD" id="cd01205">
    <property type="entry name" value="EVH1_WASP-like"/>
    <property type="match status" value="1"/>
</dbReference>
<dbReference type="CDD" id="cd22075">
    <property type="entry name" value="WH2_hN-WASP_r2_like"/>
    <property type="match status" value="1"/>
</dbReference>
<dbReference type="CDD" id="cd22074">
    <property type="entry name" value="WH2_N-WASP_r1"/>
    <property type="match status" value="1"/>
</dbReference>
<dbReference type="FunFam" id="3.90.810.10:FF:000006">
    <property type="entry name" value="Neural Wiskott-Aldrich syndrome protein"/>
    <property type="match status" value="1"/>
</dbReference>
<dbReference type="FunFam" id="2.30.29.30:FF:000130">
    <property type="entry name" value="neural Wiskott-Aldrich syndrome protein"/>
    <property type="match status" value="1"/>
</dbReference>
<dbReference type="FunFam" id="3.90.810.10:FF:000003">
    <property type="entry name" value="Neural Wiskott-Aldrich syndrome protein-like"/>
    <property type="match status" value="1"/>
</dbReference>
<dbReference type="Gene3D" id="3.90.810.10">
    <property type="entry name" value="CRIB domain"/>
    <property type="match status" value="2"/>
</dbReference>
<dbReference type="Gene3D" id="2.30.29.30">
    <property type="entry name" value="Pleckstrin-homology domain (PH domain)/Phosphotyrosine-binding domain (PTB)"/>
    <property type="match status" value="1"/>
</dbReference>
<dbReference type="InterPro" id="IPR000095">
    <property type="entry name" value="CRIB_dom"/>
</dbReference>
<dbReference type="InterPro" id="IPR036936">
    <property type="entry name" value="CRIB_dom_sf"/>
</dbReference>
<dbReference type="InterPro" id="IPR011993">
    <property type="entry name" value="PH-like_dom_sf"/>
</dbReference>
<dbReference type="InterPro" id="IPR011026">
    <property type="entry name" value="WAS_C"/>
</dbReference>
<dbReference type="InterPro" id="IPR033927">
    <property type="entry name" value="WASPfam_EVH1"/>
</dbReference>
<dbReference type="InterPro" id="IPR000697">
    <property type="entry name" value="WH1/EVH1_dom"/>
</dbReference>
<dbReference type="InterPro" id="IPR003124">
    <property type="entry name" value="WH2_dom"/>
</dbReference>
<dbReference type="PANTHER" id="PTHR11202:SF36">
    <property type="entry name" value="ACTIN NUCLEATION-PROMOTING FACTOR WASL"/>
    <property type="match status" value="1"/>
</dbReference>
<dbReference type="PANTHER" id="PTHR11202">
    <property type="entry name" value="SPROUTY-RELATED, EVH1 DOMAIN-CONTAINING PROTEIN FAMILY MEMBER"/>
    <property type="match status" value="1"/>
</dbReference>
<dbReference type="Pfam" id="PF00786">
    <property type="entry name" value="PBD"/>
    <property type="match status" value="1"/>
</dbReference>
<dbReference type="Pfam" id="PF00568">
    <property type="entry name" value="WH1"/>
    <property type="match status" value="1"/>
</dbReference>
<dbReference type="Pfam" id="PF02205">
    <property type="entry name" value="WH2"/>
    <property type="match status" value="2"/>
</dbReference>
<dbReference type="SMART" id="SM00285">
    <property type="entry name" value="PBD"/>
    <property type="match status" value="1"/>
</dbReference>
<dbReference type="SMART" id="SM00461">
    <property type="entry name" value="WH1"/>
    <property type="match status" value="1"/>
</dbReference>
<dbReference type="SMART" id="SM00246">
    <property type="entry name" value="WH2"/>
    <property type="match status" value="2"/>
</dbReference>
<dbReference type="SUPFAM" id="SSF50729">
    <property type="entry name" value="PH domain-like"/>
    <property type="match status" value="1"/>
</dbReference>
<dbReference type="SUPFAM" id="SSF47912">
    <property type="entry name" value="Wiscott-Aldrich syndrome protein, WASP, C-terminal domain"/>
    <property type="match status" value="2"/>
</dbReference>
<dbReference type="PROSITE" id="PS50108">
    <property type="entry name" value="CRIB"/>
    <property type="match status" value="1"/>
</dbReference>
<dbReference type="PROSITE" id="PS50229">
    <property type="entry name" value="WH1"/>
    <property type="match status" value="1"/>
</dbReference>
<dbReference type="PROSITE" id="PS51082">
    <property type="entry name" value="WH2"/>
    <property type="match status" value="2"/>
</dbReference>